<reference evidence="5" key="1">
    <citation type="journal article" date="2002" name="Nature">
        <title>The genome sequence of Schizosaccharomyces pombe.</title>
        <authorList>
            <person name="Wood V."/>
            <person name="Gwilliam R."/>
            <person name="Rajandream M.A."/>
            <person name="Lyne M.H."/>
            <person name="Lyne R."/>
            <person name="Stewart A."/>
            <person name="Sgouros J.G."/>
            <person name="Peat N."/>
            <person name="Hayles J."/>
            <person name="Baker S.G."/>
            <person name="Basham D."/>
            <person name="Bowman S."/>
            <person name="Brooks K."/>
            <person name="Brown D."/>
            <person name="Brown S."/>
            <person name="Chillingworth T."/>
            <person name="Churcher C.M."/>
            <person name="Collins M."/>
            <person name="Connor R."/>
            <person name="Cronin A."/>
            <person name="Davis P."/>
            <person name="Feltwell T."/>
            <person name="Fraser A."/>
            <person name="Gentles S."/>
            <person name="Goble A."/>
            <person name="Hamlin N."/>
            <person name="Harris D.E."/>
            <person name="Hidalgo J."/>
            <person name="Hodgson G."/>
            <person name="Holroyd S."/>
            <person name="Hornsby T."/>
            <person name="Howarth S."/>
            <person name="Huckle E.J."/>
            <person name="Hunt S."/>
            <person name="Jagels K."/>
            <person name="James K.D."/>
            <person name="Jones L."/>
            <person name="Jones M."/>
            <person name="Leather S."/>
            <person name="McDonald S."/>
            <person name="McLean J."/>
            <person name="Mooney P."/>
            <person name="Moule S."/>
            <person name="Mungall K.L."/>
            <person name="Murphy L.D."/>
            <person name="Niblett D."/>
            <person name="Odell C."/>
            <person name="Oliver K."/>
            <person name="O'Neil S."/>
            <person name="Pearson D."/>
            <person name="Quail M.A."/>
            <person name="Rabbinowitsch E."/>
            <person name="Rutherford K.M."/>
            <person name="Rutter S."/>
            <person name="Saunders D."/>
            <person name="Seeger K."/>
            <person name="Sharp S."/>
            <person name="Skelton J."/>
            <person name="Simmonds M.N."/>
            <person name="Squares R."/>
            <person name="Squares S."/>
            <person name="Stevens K."/>
            <person name="Taylor K."/>
            <person name="Taylor R.G."/>
            <person name="Tivey A."/>
            <person name="Walsh S.V."/>
            <person name="Warren T."/>
            <person name="Whitehead S."/>
            <person name="Woodward J.R."/>
            <person name="Volckaert G."/>
            <person name="Aert R."/>
            <person name="Robben J."/>
            <person name="Grymonprez B."/>
            <person name="Weltjens I."/>
            <person name="Vanstreels E."/>
            <person name="Rieger M."/>
            <person name="Schaefer M."/>
            <person name="Mueller-Auer S."/>
            <person name="Gabel C."/>
            <person name="Fuchs M."/>
            <person name="Duesterhoeft A."/>
            <person name="Fritzc C."/>
            <person name="Holzer E."/>
            <person name="Moestl D."/>
            <person name="Hilbert H."/>
            <person name="Borzym K."/>
            <person name="Langer I."/>
            <person name="Beck A."/>
            <person name="Lehrach H."/>
            <person name="Reinhardt R."/>
            <person name="Pohl T.M."/>
            <person name="Eger P."/>
            <person name="Zimmermann W."/>
            <person name="Wedler H."/>
            <person name="Wambutt R."/>
            <person name="Purnelle B."/>
            <person name="Goffeau A."/>
            <person name="Cadieu E."/>
            <person name="Dreano S."/>
            <person name="Gloux S."/>
            <person name="Lelaure V."/>
            <person name="Mottier S."/>
            <person name="Galibert F."/>
            <person name="Aves S.J."/>
            <person name="Xiang Z."/>
            <person name="Hunt C."/>
            <person name="Moore K."/>
            <person name="Hurst S.M."/>
            <person name="Lucas M."/>
            <person name="Rochet M."/>
            <person name="Gaillardin C."/>
            <person name="Tallada V.A."/>
            <person name="Garzon A."/>
            <person name="Thode G."/>
            <person name="Daga R.R."/>
            <person name="Cruzado L."/>
            <person name="Jimenez J."/>
            <person name="Sanchez M."/>
            <person name="del Rey F."/>
            <person name="Benito J."/>
            <person name="Dominguez A."/>
            <person name="Revuelta J.L."/>
            <person name="Moreno S."/>
            <person name="Armstrong J."/>
            <person name="Forsburg S.L."/>
            <person name="Cerutti L."/>
            <person name="Lowe T."/>
            <person name="McCombie W.R."/>
            <person name="Paulsen I."/>
            <person name="Potashkin J."/>
            <person name="Shpakovski G.V."/>
            <person name="Ussery D."/>
            <person name="Barrell B.G."/>
            <person name="Nurse P."/>
        </authorList>
    </citation>
    <scope>NUCLEOTIDE SEQUENCE [LARGE SCALE GENOMIC DNA]</scope>
    <source>
        <strain>972 / ATCC 24843</strain>
    </source>
</reference>
<reference evidence="4" key="2">
    <citation type="journal article" date="2006" name="Nat. Biotechnol.">
        <title>ORFeome cloning and global analysis of protein localization in the fission yeast Schizosaccharomyces pombe.</title>
        <authorList>
            <person name="Matsuyama A."/>
            <person name="Arai R."/>
            <person name="Yashiroda Y."/>
            <person name="Shirai A."/>
            <person name="Kamata A."/>
            <person name="Sekido S."/>
            <person name="Kobayashi Y."/>
            <person name="Hashimoto A."/>
            <person name="Hamamoto M."/>
            <person name="Hiraoka Y."/>
            <person name="Horinouchi S."/>
            <person name="Yoshida M."/>
        </authorList>
    </citation>
    <scope>SUBCELLULAR LOCATION [LARGE SCALE ANALYSIS]</scope>
</reference>
<name>QCR10_SCHPO</name>
<sequence>MISFFPNKPMYHVQPHISFITPERTMKTIPAFSRWAFAAVAGVFVFAMQVPKVKTTILQPIAFIGDHFKDKTPEEDKWL</sequence>
<dbReference type="EMBL" id="CU329671">
    <property type="protein sequence ID" value="CAB83166.1"/>
    <property type="molecule type" value="Genomic_DNA"/>
</dbReference>
<dbReference type="RefSeq" id="NP_596182.1">
    <property type="nucleotide sequence ID" value="NM_001022101.2"/>
</dbReference>
<dbReference type="PDB" id="8Q1B">
    <property type="method" value="EM"/>
    <property type="resolution" value="3.40 A"/>
    <property type="chains" value="J/U=1-79"/>
</dbReference>
<dbReference type="PDBsum" id="8Q1B"/>
<dbReference type="EMDB" id="EMD-18062"/>
<dbReference type="SMR" id="Q9P7E0"/>
<dbReference type="ComplexPortal" id="CPX-9308">
    <property type="entry name" value="Mitochondrial respiratory chain complex III"/>
</dbReference>
<dbReference type="FunCoup" id="Q9P7E0">
    <property type="interactions" value="67"/>
</dbReference>
<dbReference type="STRING" id="284812.Q9P7E0"/>
<dbReference type="PaxDb" id="4896-SPBP4H10.08.1"/>
<dbReference type="EnsemblFungi" id="SPBP4H10.08.1">
    <property type="protein sequence ID" value="SPBP4H10.08.1:pep"/>
    <property type="gene ID" value="SPBP4H10.08"/>
</dbReference>
<dbReference type="GeneID" id="2541331"/>
<dbReference type="KEGG" id="spo:2541331"/>
<dbReference type="PomBase" id="SPBP4H10.08">
    <property type="gene designation" value="qcr10"/>
</dbReference>
<dbReference type="VEuPathDB" id="FungiDB:SPBP4H10.08"/>
<dbReference type="HOGENOM" id="CLU_152072_1_0_1"/>
<dbReference type="InParanoid" id="Q9P7E0"/>
<dbReference type="OMA" id="VFLFAMQ"/>
<dbReference type="PRO" id="PR:Q9P7E0"/>
<dbReference type="Proteomes" id="UP000002485">
    <property type="component" value="Chromosome II"/>
</dbReference>
<dbReference type="GO" id="GO:0005743">
    <property type="term" value="C:mitochondrial inner membrane"/>
    <property type="evidence" value="ECO:0000305"/>
    <property type="project" value="PomBase"/>
</dbReference>
<dbReference type="GO" id="GO:0005739">
    <property type="term" value="C:mitochondrion"/>
    <property type="evidence" value="ECO:0007005"/>
    <property type="project" value="PomBase"/>
</dbReference>
<dbReference type="GO" id="GO:0045275">
    <property type="term" value="C:respiratory chain complex III"/>
    <property type="evidence" value="ECO:0000266"/>
    <property type="project" value="PomBase"/>
</dbReference>
<dbReference type="GO" id="GO:0006122">
    <property type="term" value="P:mitochondrial electron transport, ubiquinol to cytochrome c"/>
    <property type="evidence" value="ECO:0000318"/>
    <property type="project" value="GO_Central"/>
</dbReference>
<dbReference type="GO" id="GO:1902600">
    <property type="term" value="P:proton transmembrane transport"/>
    <property type="evidence" value="ECO:0007669"/>
    <property type="project" value="GOC"/>
</dbReference>
<dbReference type="InterPro" id="IPR019182">
    <property type="entry name" value="Cytochrome_b-c1_su10_fun"/>
</dbReference>
<dbReference type="PANTHER" id="PTHR28254">
    <property type="entry name" value="CYTOCHROME B-C1 COMPLEX SUBUNIT 10"/>
    <property type="match status" value="1"/>
</dbReference>
<dbReference type="PANTHER" id="PTHR28254:SF1">
    <property type="entry name" value="CYTOCHROME B-C1 COMPLEX SUBUNIT 10, MITOCHONDRIAL"/>
    <property type="match status" value="1"/>
</dbReference>
<dbReference type="Pfam" id="PF09796">
    <property type="entry name" value="QCR10"/>
    <property type="match status" value="1"/>
</dbReference>
<keyword id="KW-0002">3D-structure</keyword>
<keyword id="KW-0249">Electron transport</keyword>
<keyword id="KW-0472">Membrane</keyword>
<keyword id="KW-0496">Mitochondrion</keyword>
<keyword id="KW-0999">Mitochondrion inner membrane</keyword>
<keyword id="KW-1185">Reference proteome</keyword>
<keyword id="KW-0679">Respiratory chain</keyword>
<keyword id="KW-0812">Transmembrane</keyword>
<keyword id="KW-1133">Transmembrane helix</keyword>
<keyword id="KW-0813">Transport</keyword>
<comment type="function">
    <text evidence="1">Component of the ubiquinol-cytochrome c oxidoreductase, a multisubunit transmembrane complex that is part of the mitochondrial electron transport chain which drives oxidative phosphorylation. The respiratory chain contains 3 multisubunit complexes succinate dehydrogenase (complex II, CII), ubiquinol-cytochrome c oxidoreductase (cytochrome b-c1 complex, complex III, CIII) and cytochrome c oxidase (complex IV, CIV), that cooperate to transfer electrons derived from NADH and succinate to molecular oxygen, creating an electrochemical gradient over the inner membrane that drives transmembrane transport and the ATP synthase. The cytochrome b-c1 complex catalyzes electron transfer from ubiquinol to cytochrome c, linking this redox reaction to translocation of protons across the mitochondrial inner membrane, with protons being carried across the membrane as hydrogens on the quinol. In the process called Q cycle, 2 protons are consumed from the matrix, 4 protons are released into the intermembrane space and 2 electrons are passed to cytochrome c. QCR10 has a role in CIII assembly and RIP1 stability.</text>
</comment>
<comment type="subunit">
    <text evidence="1">Component of the ubiquinol-cytochrome c oxidoreductase (cytochrome b-c1 complex, complex III, CIII), a multisubunit enzyme composed of 3 respiratory subunits cytochrome b, cytochrome c1 and Rieske protein, 2 core protein subunits, and additional low-molecular weight protein subunits. The complex exists as an obligatory dimer and forms supercomplexes (SCs) in the inner mitochondrial membrane with cytochrome c oxidase (complex IV, CIV).</text>
</comment>
<comment type="subcellular location">
    <subcellularLocation>
        <location evidence="3">Mitochondrion inner membrane</location>
        <topology evidence="1">Single-pass membrane protein</topology>
    </subcellularLocation>
</comment>
<comment type="similarity">
    <text evidence="2">Belongs to the UQCR11/QCR10 family.</text>
</comment>
<gene>
    <name evidence="5" type="primary">qcr10</name>
    <name type="ORF">SPBP4H10.08</name>
</gene>
<proteinExistence type="evidence at protein level"/>
<protein>
    <recommendedName>
        <fullName evidence="1">Cytochrome b-c1 complex subunit 10</fullName>
    </recommendedName>
    <alternativeName>
        <fullName evidence="1">Complex III subunit 10</fullName>
    </alternativeName>
    <alternativeName>
        <fullName evidence="5">Ubiquinol-cytochrome-c reductase complex subunit qcr10</fullName>
    </alternativeName>
</protein>
<feature type="chain" id="PRO_0000353193" description="Cytochrome b-c1 complex subunit 10">
    <location>
        <begin position="1"/>
        <end position="79"/>
    </location>
</feature>
<feature type="topological domain" description="Mitochondrial matrix" evidence="1">
    <location>
        <begin position="1"/>
        <end position="23"/>
    </location>
</feature>
<feature type="transmembrane region" description="Helical" evidence="1">
    <location>
        <begin position="24"/>
        <end position="47"/>
    </location>
</feature>
<feature type="topological domain" description="Mitochondrial intermembrane" evidence="1">
    <location>
        <begin position="48"/>
        <end position="79"/>
    </location>
</feature>
<accession>Q9P7E0</accession>
<organism>
    <name type="scientific">Schizosaccharomyces pombe (strain 972 / ATCC 24843)</name>
    <name type="common">Fission yeast</name>
    <dbReference type="NCBI Taxonomy" id="284812"/>
    <lineage>
        <taxon>Eukaryota</taxon>
        <taxon>Fungi</taxon>
        <taxon>Dikarya</taxon>
        <taxon>Ascomycota</taxon>
        <taxon>Taphrinomycotina</taxon>
        <taxon>Schizosaccharomycetes</taxon>
        <taxon>Schizosaccharomycetales</taxon>
        <taxon>Schizosaccharomycetaceae</taxon>
        <taxon>Schizosaccharomyces</taxon>
    </lineage>
</organism>
<evidence type="ECO:0000250" key="1">
    <source>
        <dbReference type="UniProtKB" id="P37299"/>
    </source>
</evidence>
<evidence type="ECO:0000255" key="2"/>
<evidence type="ECO:0000269" key="3">
    <source>
    </source>
</evidence>
<evidence type="ECO:0000305" key="4"/>
<evidence type="ECO:0000312" key="5">
    <source>
        <dbReference type="EMBL" id="CAB83166.1"/>
    </source>
</evidence>